<name>VPX_SIVVT</name>
<organism>
    <name type="scientific">Simian immunodeficiency virus agm.vervet (isolate AGM TYO-1)</name>
    <name type="common">SIV-agm.ver</name>
    <name type="synonym">Simian immunodeficiency virus African green monkey vervet</name>
    <dbReference type="NCBI Taxonomy" id="11731"/>
    <lineage>
        <taxon>Viruses</taxon>
        <taxon>Riboviria</taxon>
        <taxon>Pararnavirae</taxon>
        <taxon>Artverviricota</taxon>
        <taxon>Revtraviricetes</taxon>
        <taxon>Ortervirales</taxon>
        <taxon>Retroviridae</taxon>
        <taxon>Orthoretrovirinae</taxon>
        <taxon>Lentivirus</taxon>
        <taxon>Simian immunodeficiency virus</taxon>
    </lineage>
</organism>
<protein>
    <recommendedName>
        <fullName>Protein Vpx</fullName>
    </recommendedName>
    <alternativeName>
        <fullName>Viral protein X</fullName>
    </alternativeName>
    <alternativeName>
        <fullName>X ORF protein</fullName>
    </alternativeName>
</protein>
<comment type="function">
    <text evidence="1">Plays a role in nuclear translocation of the viral pre-integration complex (PIC), thus is required for the virus to infect non-dividing cells. Targets specific host proteins for degradation by the 26S proteasome. Acts by associating with the cellular CUL4A-DDB1 E3 ligase complex through direct interaction with host VPRPB/DCAF-1. This change in the E3 ligase substrate specificity results in the degradation of host SAMHD1. In turn, SAMHD1 depletion allows viral replication in host myeloid cells by preventing SAMHD1-mediated hydrolysis of intracellular dNTPs necessary for reverse transcription (By similarity).</text>
</comment>
<comment type="subunit">
    <text evidence="1">Interacts with the P6 region of unprocessed GAG. Interacts with host VPRBP/DCAF1, leading to change substrate specificity of the CUL4A-DDB1 E3 ligase complex (By similarity).</text>
</comment>
<comment type="subcellular location">
    <subcellularLocation>
        <location>Virion</location>
    </subcellularLocation>
    <subcellularLocation>
        <location>Host nucleus</location>
    </subcellularLocation>
    <text evidence="1">Nuclear just after virion uncoating, or if expressed in the absence of unprocessed GAG.</text>
</comment>
<comment type="miscellaneous">
    <text>This is an African green monkey isolate.</text>
</comment>
<comment type="similarity">
    <text evidence="3">Belongs to the lentivirus VPX protein family.</text>
</comment>
<gene>
    <name type="primary">vpx</name>
</gene>
<reference key="1">
    <citation type="journal article" date="1988" name="Nature">
        <title>Sequence of simian immunodeficiency virus from African green monkey, a new member of the HIV/SIV group.</title>
        <authorList>
            <person name="Fukasawa M."/>
            <person name="Miura T."/>
            <person name="Hasegawa A."/>
            <person name="Morikawa S."/>
            <person name="Tsujimoto H."/>
            <person name="Miki K."/>
            <person name="Kitamura T."/>
            <person name="Hayami M."/>
        </authorList>
    </citation>
    <scope>NUCLEOTIDE SEQUENCE [GENOMIC DNA]</scope>
</reference>
<feature type="chain" id="PRO_0000085402" description="Protein Vpx">
    <location>
        <begin position="1"/>
        <end position="119"/>
    </location>
</feature>
<feature type="region of interest" description="Disordered" evidence="2">
    <location>
        <begin position="98"/>
        <end position="119"/>
    </location>
</feature>
<dbReference type="EMBL" id="X07805">
    <property type="protein sequence ID" value="CAA30660.1"/>
    <property type="molecule type" value="Genomic_DNA"/>
</dbReference>
<dbReference type="SMR" id="P05918"/>
<dbReference type="GO" id="GO:0042025">
    <property type="term" value="C:host cell nucleus"/>
    <property type="evidence" value="ECO:0007669"/>
    <property type="project" value="UniProtKB-SubCell"/>
</dbReference>
<dbReference type="GO" id="GO:0044423">
    <property type="term" value="C:virion component"/>
    <property type="evidence" value="ECO:0007669"/>
    <property type="project" value="UniProtKB-KW"/>
</dbReference>
<dbReference type="GO" id="GO:0052170">
    <property type="term" value="P:symbiont-mediated suppression of host innate immune response"/>
    <property type="evidence" value="ECO:0007669"/>
    <property type="project" value="UniProtKB-KW"/>
</dbReference>
<dbReference type="GO" id="GO:0019058">
    <property type="term" value="P:viral life cycle"/>
    <property type="evidence" value="ECO:0007669"/>
    <property type="project" value="InterPro"/>
</dbReference>
<dbReference type="Gene3D" id="1.20.5.4730">
    <property type="match status" value="1"/>
</dbReference>
<dbReference type="InterPro" id="IPR053711">
    <property type="entry name" value="Lentiviral_Vpx_assoc_factor"/>
</dbReference>
<dbReference type="InterPro" id="IPR000012">
    <property type="entry name" value="RetroV_VpR/X"/>
</dbReference>
<dbReference type="Pfam" id="PF00522">
    <property type="entry name" value="VPR"/>
    <property type="match status" value="1"/>
</dbReference>
<dbReference type="PRINTS" id="PR00444">
    <property type="entry name" value="HIVVPRVPX"/>
</dbReference>
<organismHost>
    <name type="scientific">Cercopithecidae</name>
    <name type="common">Old World monkeys</name>
    <dbReference type="NCBI Taxonomy" id="9527"/>
</organismHost>
<keyword id="KW-1048">Host nucleus</keyword>
<keyword id="KW-0945">Host-virus interaction</keyword>
<keyword id="KW-1090">Inhibition of host innate immune response by virus</keyword>
<keyword id="KW-0899">Viral immunoevasion</keyword>
<keyword id="KW-0946">Virion</keyword>
<accession>P05918</accession>
<proteinExistence type="inferred from homology"/>
<evidence type="ECO:0000250" key="1"/>
<evidence type="ECO:0000256" key="2">
    <source>
        <dbReference type="SAM" id="MobiDB-lite"/>
    </source>
</evidence>
<evidence type="ECO:0000305" key="3"/>
<sequence>MASGRDPREARPGEVEIWDLSREPWDKWLRDMLQDLNQEARLHFGRELLFQVWNYCQEEGERHGTPMMERAYKYYRLVQKALFVHFRCGCRRRQPFEPYEERRDGQGGGRANRVPPGLE</sequence>